<protein>
    <recommendedName>
        <fullName>Putative two-component response regulator ARR19</fullName>
    </recommendedName>
</protein>
<comment type="function">
    <text evidence="1">Putative transcriptional activator that binds specifically to the DNA sequence 5'-[AG]GATT-3'. Functions as a response regulator involved in His-to-Asp phosphorelay signal transduction system. Phosphorylation of the Asp residue in the receiver domain activates the ability of the protein to promote the transcription of target genes. Could directly activate some type-A response regulators in response to cytokinins (By similarity).</text>
</comment>
<comment type="subunit">
    <text evidence="1">Binds the target DNA as a monomer.</text>
</comment>
<comment type="subcellular location">
    <subcellularLocation>
        <location>Nucleus</location>
    </subcellularLocation>
</comment>
<comment type="alternative products">
    <event type="alternative splicing"/>
    <isoform>
        <id>Q9M9B9-1</id>
        <name>1</name>
        <sequence type="displayed"/>
    </isoform>
    <text>A number of isoforms are produced. According to EST sequences.</text>
</comment>
<comment type="tissue specificity">
    <text evidence="4">Detected in trichomes and siliques.</text>
</comment>
<comment type="PTM">
    <text>Two-component system major event consists of a His-to-Asp phosphorelay between a sensor histidine kinase (HK) and a response regulator (RR). In plants, the His-to-Asp phosphorelay involves an additional intermediate named Histidine-containing phosphotransfer protein (HPt). This multistep phosphorelay consists of a His-Asp-His-Asp sequential transfer of a phosphate group between first a His and an Asp of the HK protein, followed by the transfer to a conserved His of the HPt protein and finally the transfer to an Asp in the receiver domain of the RR protein.</text>
</comment>
<comment type="similarity">
    <text evidence="5">Belongs to the ARR family. Type-B subfamily.</text>
</comment>
<comment type="sequence caution" evidence="5">
    <conflict type="erroneous gene model prediction">
        <sequence resource="EMBL-CDS" id="AAF69721"/>
    </conflict>
</comment>
<comment type="sequence caution" evidence="5">
    <conflict type="erroneous gene model prediction">
        <sequence resource="EMBL-CDS" id="AEE32403"/>
    </conflict>
</comment>
<proteinExistence type="evidence at transcript level"/>
<gene>
    <name type="primary">ARR19</name>
    <name type="ordered locus">At1g49190</name>
    <name type="ORF">F27J15.4</name>
</gene>
<accession>Q9M9B9</accession>
<accession>F4I1N9</accession>
<accession>F4I1P0</accession>
<reference key="1">
    <citation type="journal article" date="2000" name="Nature">
        <title>Sequence and analysis of chromosome 1 of the plant Arabidopsis thaliana.</title>
        <authorList>
            <person name="Theologis A."/>
            <person name="Ecker J.R."/>
            <person name="Palm C.J."/>
            <person name="Federspiel N.A."/>
            <person name="Kaul S."/>
            <person name="White O."/>
            <person name="Alonso J."/>
            <person name="Altafi H."/>
            <person name="Araujo R."/>
            <person name="Bowman C.L."/>
            <person name="Brooks S.Y."/>
            <person name="Buehler E."/>
            <person name="Chan A."/>
            <person name="Chao Q."/>
            <person name="Chen H."/>
            <person name="Cheuk R.F."/>
            <person name="Chin C.W."/>
            <person name="Chung M.K."/>
            <person name="Conn L."/>
            <person name="Conway A.B."/>
            <person name="Conway A.R."/>
            <person name="Creasy T.H."/>
            <person name="Dewar K."/>
            <person name="Dunn P."/>
            <person name="Etgu P."/>
            <person name="Feldblyum T.V."/>
            <person name="Feng J.-D."/>
            <person name="Fong B."/>
            <person name="Fujii C.Y."/>
            <person name="Gill J.E."/>
            <person name="Goldsmith A.D."/>
            <person name="Haas B."/>
            <person name="Hansen N.F."/>
            <person name="Hughes B."/>
            <person name="Huizar L."/>
            <person name="Hunter J.L."/>
            <person name="Jenkins J."/>
            <person name="Johnson-Hopson C."/>
            <person name="Khan S."/>
            <person name="Khaykin E."/>
            <person name="Kim C.J."/>
            <person name="Koo H.L."/>
            <person name="Kremenetskaia I."/>
            <person name="Kurtz D.B."/>
            <person name="Kwan A."/>
            <person name="Lam B."/>
            <person name="Langin-Hooper S."/>
            <person name="Lee A."/>
            <person name="Lee J.M."/>
            <person name="Lenz C.A."/>
            <person name="Li J.H."/>
            <person name="Li Y.-P."/>
            <person name="Lin X."/>
            <person name="Liu S.X."/>
            <person name="Liu Z.A."/>
            <person name="Luros J.S."/>
            <person name="Maiti R."/>
            <person name="Marziali A."/>
            <person name="Militscher J."/>
            <person name="Miranda M."/>
            <person name="Nguyen M."/>
            <person name="Nierman W.C."/>
            <person name="Osborne B.I."/>
            <person name="Pai G."/>
            <person name="Peterson J."/>
            <person name="Pham P.K."/>
            <person name="Rizzo M."/>
            <person name="Rooney T."/>
            <person name="Rowley D."/>
            <person name="Sakano H."/>
            <person name="Salzberg S.L."/>
            <person name="Schwartz J.R."/>
            <person name="Shinn P."/>
            <person name="Southwick A.M."/>
            <person name="Sun H."/>
            <person name="Tallon L.J."/>
            <person name="Tambunga G."/>
            <person name="Toriumi M.J."/>
            <person name="Town C.D."/>
            <person name="Utterback T."/>
            <person name="Van Aken S."/>
            <person name="Vaysberg M."/>
            <person name="Vysotskaia V.S."/>
            <person name="Walker M."/>
            <person name="Wu D."/>
            <person name="Yu G."/>
            <person name="Fraser C.M."/>
            <person name="Venter J.C."/>
            <person name="Davis R.W."/>
        </authorList>
    </citation>
    <scope>NUCLEOTIDE SEQUENCE [LARGE SCALE GENOMIC DNA]</scope>
    <source>
        <strain>cv. Columbia</strain>
    </source>
</reference>
<reference key="2">
    <citation type="journal article" date="2017" name="Plant J.">
        <title>Araport11: a complete reannotation of the Arabidopsis thaliana reference genome.</title>
        <authorList>
            <person name="Cheng C.Y."/>
            <person name="Krishnakumar V."/>
            <person name="Chan A.P."/>
            <person name="Thibaud-Nissen F."/>
            <person name="Schobel S."/>
            <person name="Town C.D."/>
        </authorList>
    </citation>
    <scope>GENOME REANNOTATION</scope>
    <source>
        <strain>cv. Columbia</strain>
    </source>
</reference>
<reference key="3">
    <citation type="journal article" date="2004" name="Plant Physiol.">
        <title>Type-B response regulators display overlapping expression patterns in Arabidopsis.</title>
        <authorList>
            <person name="Mason M.G."/>
            <person name="Li J."/>
            <person name="Mathews D.E."/>
            <person name="Kieber J.J."/>
            <person name="Schaller G.E."/>
        </authorList>
    </citation>
    <scope>TISSUE SPECIFICITY</scope>
</reference>
<evidence type="ECO:0000250" key="1"/>
<evidence type="ECO:0000255" key="2"/>
<evidence type="ECO:0000255" key="3">
    <source>
        <dbReference type="PROSITE-ProRule" id="PRU00169"/>
    </source>
</evidence>
<evidence type="ECO:0000269" key="4">
    <source>
    </source>
</evidence>
<evidence type="ECO:0000305" key="5"/>
<sequence length="407" mass="46155">MLVGKISGYEDNTRSLERETSEITSLLSQFPGNTNVLVVDTNFTTLLNMKQIMKQYAYQVSIETDAEKALAFLTSCKHEINIVIWDFHMPGIDGLQALKSITSKLDLPVVIMSDDNQTESVMKATFYGACDYVVKPVKEEVMANIWQHIVRKRLIFKPDVAPPKPRMTWSEVFQPVQSHLVPTDGLDRDHFDSITINGGNGIQNMEKKQGKKPRKPRMTWTEELHQKFLEAIEIIGGIEKANPKVLVECLQEMRIEGITRSNVASHLQKHRINLEENQIPQQTQGNGWATAYGTLAPSLQGSDNVNTTIPSYLMNGPATLNQIQQNQYQNGFLTMNNNQIITNPPPPLPYLDHHHQQQHQSSPQFNYLMNNEELLQASGLSATDLELTYPSLPYDPQEYLINGYNYN</sequence>
<keyword id="KW-0010">Activator</keyword>
<keyword id="KW-0025">Alternative splicing</keyword>
<keyword id="KW-0932">Cytokinin signaling pathway</keyword>
<keyword id="KW-0238">DNA-binding</keyword>
<keyword id="KW-0539">Nucleus</keyword>
<keyword id="KW-0597">Phosphoprotein</keyword>
<keyword id="KW-1185">Reference proteome</keyword>
<keyword id="KW-0804">Transcription</keyword>
<keyword id="KW-0805">Transcription regulation</keyword>
<keyword id="KW-0902">Two-component regulatory system</keyword>
<name>ARR19_ARATH</name>
<feature type="chain" id="PRO_0000132301" description="Putative two-component response regulator ARR19">
    <location>
        <begin position="1"/>
        <end position="407"/>
    </location>
</feature>
<feature type="domain" description="Response regulatory" evidence="3">
    <location>
        <begin position="35"/>
        <end position="150"/>
    </location>
</feature>
<feature type="DNA-binding region" description="Myb-like GARP">
    <location>
        <begin position="217"/>
        <end position="271"/>
    </location>
</feature>
<feature type="short sequence motif" description="Nuclear localization signal" evidence="2">
    <location>
        <begin position="214"/>
        <end position="217"/>
    </location>
</feature>
<feature type="modified residue" description="4-aspartylphosphate" evidence="3">
    <location>
        <position position="86"/>
    </location>
</feature>
<dbReference type="EMBL" id="AC016041">
    <property type="protein sequence ID" value="AAF69721.1"/>
    <property type="status" value="ALT_SEQ"/>
    <property type="molecule type" value="Genomic_DNA"/>
</dbReference>
<dbReference type="EMBL" id="CP002684">
    <property type="protein sequence ID" value="AEE32402.2"/>
    <property type="molecule type" value="Genomic_DNA"/>
</dbReference>
<dbReference type="EMBL" id="CP002684">
    <property type="protein sequence ID" value="AEE32403.1"/>
    <property type="status" value="ALT_SEQ"/>
    <property type="molecule type" value="Genomic_DNA"/>
</dbReference>
<dbReference type="PIR" id="F96528">
    <property type="entry name" value="F96528"/>
</dbReference>
<dbReference type="RefSeq" id="NP_001185179.1">
    <property type="nucleotide sequence ID" value="NM_001198250.1"/>
</dbReference>
<dbReference type="RefSeq" id="NP_001319180.1">
    <molecule id="Q9M9B9-1"/>
    <property type="nucleotide sequence ID" value="NM_001333372.1"/>
</dbReference>
<dbReference type="SMR" id="Q9M9B9"/>
<dbReference type="FunCoup" id="Q9M9B9">
    <property type="interactions" value="292"/>
</dbReference>
<dbReference type="STRING" id="3702.Q9M9B9"/>
<dbReference type="EnsemblPlants" id="AT1G49190.1">
    <molecule id="Q9M9B9-1"/>
    <property type="protein sequence ID" value="AT1G49190.1"/>
    <property type="gene ID" value="AT1G49190"/>
</dbReference>
<dbReference type="GeneID" id="841342"/>
<dbReference type="Gramene" id="AT1G49190.1">
    <molecule id="Q9M9B9-1"/>
    <property type="protein sequence ID" value="AT1G49190.1"/>
    <property type="gene ID" value="AT1G49190"/>
</dbReference>
<dbReference type="KEGG" id="ath:AT1G49190"/>
<dbReference type="Araport" id="AT1G49190"/>
<dbReference type="TAIR" id="AT1G49190">
    <property type="gene designation" value="RR19"/>
</dbReference>
<dbReference type="eggNOG" id="KOG1601">
    <property type="taxonomic scope" value="Eukaryota"/>
</dbReference>
<dbReference type="InParanoid" id="Q9M9B9"/>
<dbReference type="PRO" id="PR:Q9M9B9"/>
<dbReference type="Proteomes" id="UP000006548">
    <property type="component" value="Chromosome 1"/>
</dbReference>
<dbReference type="ExpressionAtlas" id="Q9M9B9">
    <property type="expression patterns" value="baseline and differential"/>
</dbReference>
<dbReference type="GO" id="GO:0005634">
    <property type="term" value="C:nucleus"/>
    <property type="evidence" value="ECO:0000314"/>
    <property type="project" value="TAIR"/>
</dbReference>
<dbReference type="GO" id="GO:0003677">
    <property type="term" value="F:DNA binding"/>
    <property type="evidence" value="ECO:0007669"/>
    <property type="project" value="UniProtKB-KW"/>
</dbReference>
<dbReference type="GO" id="GO:0003700">
    <property type="term" value="F:DNA-binding transcription factor activity"/>
    <property type="evidence" value="ECO:0000250"/>
    <property type="project" value="TAIR"/>
</dbReference>
<dbReference type="GO" id="GO:0000156">
    <property type="term" value="F:phosphorelay response regulator activity"/>
    <property type="evidence" value="ECO:0000250"/>
    <property type="project" value="TAIR"/>
</dbReference>
<dbReference type="GO" id="GO:0009736">
    <property type="term" value="P:cytokinin-activated signaling pathway"/>
    <property type="evidence" value="ECO:0000304"/>
    <property type="project" value="TAIR"/>
</dbReference>
<dbReference type="GO" id="GO:0006355">
    <property type="term" value="P:regulation of DNA-templated transcription"/>
    <property type="evidence" value="ECO:0000304"/>
    <property type="project" value="TAIR"/>
</dbReference>
<dbReference type="CDD" id="cd17584">
    <property type="entry name" value="REC_typeB_ARR-like"/>
    <property type="match status" value="1"/>
</dbReference>
<dbReference type="FunFam" id="1.10.10.60:FF:000007">
    <property type="entry name" value="Two-component response regulator"/>
    <property type="match status" value="1"/>
</dbReference>
<dbReference type="FunFam" id="3.40.50.2300:FF:000206">
    <property type="entry name" value="Two-component response regulator-like APRR2"/>
    <property type="match status" value="1"/>
</dbReference>
<dbReference type="Gene3D" id="3.40.50.2300">
    <property type="match status" value="1"/>
</dbReference>
<dbReference type="Gene3D" id="1.10.10.60">
    <property type="entry name" value="Homeodomain-like"/>
    <property type="match status" value="1"/>
</dbReference>
<dbReference type="InterPro" id="IPR045279">
    <property type="entry name" value="ARR-like"/>
</dbReference>
<dbReference type="InterPro" id="IPR011006">
    <property type="entry name" value="CheY-like_superfamily"/>
</dbReference>
<dbReference type="InterPro" id="IPR009057">
    <property type="entry name" value="Homeodomain-like_sf"/>
</dbReference>
<dbReference type="InterPro" id="IPR006447">
    <property type="entry name" value="Myb_dom_plants"/>
</dbReference>
<dbReference type="InterPro" id="IPR017053">
    <property type="entry name" value="Response_reg_B-typ_pln"/>
</dbReference>
<dbReference type="InterPro" id="IPR001789">
    <property type="entry name" value="Sig_transdc_resp-reg_receiver"/>
</dbReference>
<dbReference type="NCBIfam" id="TIGR01557">
    <property type="entry name" value="myb_SHAQKYF"/>
    <property type="match status" value="1"/>
</dbReference>
<dbReference type="PANTHER" id="PTHR43874">
    <property type="entry name" value="TWO-COMPONENT RESPONSE REGULATOR"/>
    <property type="match status" value="1"/>
</dbReference>
<dbReference type="PANTHER" id="PTHR43874:SF98">
    <property type="entry name" value="TWO-COMPONENT RESPONSE REGULATOR ARR19-RELATED"/>
    <property type="match status" value="1"/>
</dbReference>
<dbReference type="Pfam" id="PF00072">
    <property type="entry name" value="Response_reg"/>
    <property type="match status" value="1"/>
</dbReference>
<dbReference type="PIRSF" id="PIRSF036392">
    <property type="entry name" value="RR_ARR_type-B"/>
    <property type="match status" value="1"/>
</dbReference>
<dbReference type="SMART" id="SM00448">
    <property type="entry name" value="REC"/>
    <property type="match status" value="1"/>
</dbReference>
<dbReference type="SUPFAM" id="SSF52172">
    <property type="entry name" value="CheY-like"/>
    <property type="match status" value="1"/>
</dbReference>
<dbReference type="SUPFAM" id="SSF46689">
    <property type="entry name" value="Homeodomain-like"/>
    <property type="match status" value="1"/>
</dbReference>
<dbReference type="PROSITE" id="PS50110">
    <property type="entry name" value="RESPONSE_REGULATORY"/>
    <property type="match status" value="1"/>
</dbReference>
<organism>
    <name type="scientific">Arabidopsis thaliana</name>
    <name type="common">Mouse-ear cress</name>
    <dbReference type="NCBI Taxonomy" id="3702"/>
    <lineage>
        <taxon>Eukaryota</taxon>
        <taxon>Viridiplantae</taxon>
        <taxon>Streptophyta</taxon>
        <taxon>Embryophyta</taxon>
        <taxon>Tracheophyta</taxon>
        <taxon>Spermatophyta</taxon>
        <taxon>Magnoliopsida</taxon>
        <taxon>eudicotyledons</taxon>
        <taxon>Gunneridae</taxon>
        <taxon>Pentapetalae</taxon>
        <taxon>rosids</taxon>
        <taxon>malvids</taxon>
        <taxon>Brassicales</taxon>
        <taxon>Brassicaceae</taxon>
        <taxon>Camelineae</taxon>
        <taxon>Arabidopsis</taxon>
    </lineage>
</organism>